<reference key="1">
    <citation type="journal article" date="2001" name="Proc. Natl. Acad. Sci. U.S.A.">
        <title>Complete genome sequence of Caulobacter crescentus.</title>
        <authorList>
            <person name="Nierman W.C."/>
            <person name="Feldblyum T.V."/>
            <person name="Laub M.T."/>
            <person name="Paulsen I.T."/>
            <person name="Nelson K.E."/>
            <person name="Eisen J.A."/>
            <person name="Heidelberg J.F."/>
            <person name="Alley M.R.K."/>
            <person name="Ohta N."/>
            <person name="Maddock J.R."/>
            <person name="Potocka I."/>
            <person name="Nelson W.C."/>
            <person name="Newton A."/>
            <person name="Stephens C."/>
            <person name="Phadke N.D."/>
            <person name="Ely B."/>
            <person name="DeBoy R.T."/>
            <person name="Dodson R.J."/>
            <person name="Durkin A.S."/>
            <person name="Gwinn M.L."/>
            <person name="Haft D.H."/>
            <person name="Kolonay J.F."/>
            <person name="Smit J."/>
            <person name="Craven M.B."/>
            <person name="Khouri H.M."/>
            <person name="Shetty J."/>
            <person name="Berry K.J."/>
            <person name="Utterback T.R."/>
            <person name="Tran K."/>
            <person name="Wolf A.M."/>
            <person name="Vamathevan J.J."/>
            <person name="Ermolaeva M.D."/>
            <person name="White O."/>
            <person name="Salzberg S.L."/>
            <person name="Venter J.C."/>
            <person name="Shapiro L."/>
            <person name="Fraser C.M."/>
        </authorList>
    </citation>
    <scope>NUCLEOTIDE SEQUENCE [LARGE SCALE GENOMIC DNA]</scope>
    <source>
        <strain>ATCC 19089 / CIP 103742 / CB 15</strain>
    </source>
</reference>
<keyword id="KW-0963">Cytoplasm</keyword>
<keyword id="KW-0444">Lipid biosynthesis</keyword>
<keyword id="KW-0443">Lipid metabolism</keyword>
<keyword id="KW-0520">NAD</keyword>
<keyword id="KW-0521">NADP</keyword>
<keyword id="KW-0547">Nucleotide-binding</keyword>
<keyword id="KW-0560">Oxidoreductase</keyword>
<keyword id="KW-0594">Phospholipid biosynthesis</keyword>
<keyword id="KW-1208">Phospholipid metabolism</keyword>
<keyword id="KW-1185">Reference proteome</keyword>
<dbReference type="EC" id="1.1.1.94" evidence="1"/>
<dbReference type="EMBL" id="AE005673">
    <property type="protein sequence ID" value="AAK22057.1"/>
    <property type="molecule type" value="Genomic_DNA"/>
</dbReference>
<dbReference type="PIR" id="E87257">
    <property type="entry name" value="E87257"/>
</dbReference>
<dbReference type="RefSeq" id="NP_418889.1">
    <property type="nucleotide sequence ID" value="NC_002696.2"/>
</dbReference>
<dbReference type="SMR" id="P58141"/>
<dbReference type="STRING" id="190650.CC_0070"/>
<dbReference type="EnsemblBacteria" id="AAK22057">
    <property type="protein sequence ID" value="AAK22057"/>
    <property type="gene ID" value="CC_0070"/>
</dbReference>
<dbReference type="KEGG" id="ccr:CC_0070"/>
<dbReference type="PATRIC" id="fig|190650.5.peg.67"/>
<dbReference type="eggNOG" id="COG0240">
    <property type="taxonomic scope" value="Bacteria"/>
</dbReference>
<dbReference type="HOGENOM" id="CLU_033449_0_2_5"/>
<dbReference type="BioCyc" id="CAULO:CC0070-MONOMER"/>
<dbReference type="UniPathway" id="UPA00940"/>
<dbReference type="Proteomes" id="UP000001816">
    <property type="component" value="Chromosome"/>
</dbReference>
<dbReference type="GO" id="GO:0005829">
    <property type="term" value="C:cytosol"/>
    <property type="evidence" value="ECO:0007669"/>
    <property type="project" value="TreeGrafter"/>
</dbReference>
<dbReference type="GO" id="GO:0047952">
    <property type="term" value="F:glycerol-3-phosphate dehydrogenase [NAD(P)+] activity"/>
    <property type="evidence" value="ECO:0007669"/>
    <property type="project" value="UniProtKB-UniRule"/>
</dbReference>
<dbReference type="GO" id="GO:0051287">
    <property type="term" value="F:NAD binding"/>
    <property type="evidence" value="ECO:0007669"/>
    <property type="project" value="InterPro"/>
</dbReference>
<dbReference type="GO" id="GO:0005975">
    <property type="term" value="P:carbohydrate metabolic process"/>
    <property type="evidence" value="ECO:0007669"/>
    <property type="project" value="InterPro"/>
</dbReference>
<dbReference type="GO" id="GO:0046167">
    <property type="term" value="P:glycerol-3-phosphate biosynthetic process"/>
    <property type="evidence" value="ECO:0007669"/>
    <property type="project" value="UniProtKB-UniRule"/>
</dbReference>
<dbReference type="GO" id="GO:0046168">
    <property type="term" value="P:glycerol-3-phosphate catabolic process"/>
    <property type="evidence" value="ECO:0007669"/>
    <property type="project" value="InterPro"/>
</dbReference>
<dbReference type="GO" id="GO:0006650">
    <property type="term" value="P:glycerophospholipid metabolic process"/>
    <property type="evidence" value="ECO:0007669"/>
    <property type="project" value="UniProtKB-UniRule"/>
</dbReference>
<dbReference type="GO" id="GO:0008654">
    <property type="term" value="P:phospholipid biosynthetic process"/>
    <property type="evidence" value="ECO:0007669"/>
    <property type="project" value="UniProtKB-KW"/>
</dbReference>
<dbReference type="FunFam" id="1.10.1040.10:FF:000001">
    <property type="entry name" value="Glycerol-3-phosphate dehydrogenase [NAD(P)+]"/>
    <property type="match status" value="1"/>
</dbReference>
<dbReference type="FunFam" id="3.40.50.720:FF:000019">
    <property type="entry name" value="Glycerol-3-phosphate dehydrogenase [NAD(P)+]"/>
    <property type="match status" value="1"/>
</dbReference>
<dbReference type="Gene3D" id="1.10.1040.10">
    <property type="entry name" value="N-(1-d-carboxylethyl)-l-norvaline Dehydrogenase, domain 2"/>
    <property type="match status" value="1"/>
</dbReference>
<dbReference type="Gene3D" id="3.40.50.720">
    <property type="entry name" value="NAD(P)-binding Rossmann-like Domain"/>
    <property type="match status" value="1"/>
</dbReference>
<dbReference type="HAMAP" id="MF_00394">
    <property type="entry name" value="NAD_Glyc3P_dehydrog"/>
    <property type="match status" value="1"/>
</dbReference>
<dbReference type="InterPro" id="IPR008927">
    <property type="entry name" value="6-PGluconate_DH-like_C_sf"/>
</dbReference>
<dbReference type="InterPro" id="IPR013328">
    <property type="entry name" value="6PGD_dom2"/>
</dbReference>
<dbReference type="InterPro" id="IPR006168">
    <property type="entry name" value="G3P_DH_NAD-dep"/>
</dbReference>
<dbReference type="InterPro" id="IPR006109">
    <property type="entry name" value="G3P_DH_NAD-dep_C"/>
</dbReference>
<dbReference type="InterPro" id="IPR011128">
    <property type="entry name" value="G3P_DH_NAD-dep_N"/>
</dbReference>
<dbReference type="InterPro" id="IPR036291">
    <property type="entry name" value="NAD(P)-bd_dom_sf"/>
</dbReference>
<dbReference type="NCBIfam" id="NF000940">
    <property type="entry name" value="PRK00094.1-2"/>
    <property type="match status" value="1"/>
</dbReference>
<dbReference type="NCBIfam" id="NF000942">
    <property type="entry name" value="PRK00094.1-4"/>
    <property type="match status" value="1"/>
</dbReference>
<dbReference type="PANTHER" id="PTHR11728">
    <property type="entry name" value="GLYCEROL-3-PHOSPHATE DEHYDROGENASE"/>
    <property type="match status" value="1"/>
</dbReference>
<dbReference type="PANTHER" id="PTHR11728:SF1">
    <property type="entry name" value="GLYCEROL-3-PHOSPHATE DEHYDROGENASE [NAD(+)] 2, CHLOROPLASTIC"/>
    <property type="match status" value="1"/>
</dbReference>
<dbReference type="Pfam" id="PF07479">
    <property type="entry name" value="NAD_Gly3P_dh_C"/>
    <property type="match status" value="1"/>
</dbReference>
<dbReference type="Pfam" id="PF01210">
    <property type="entry name" value="NAD_Gly3P_dh_N"/>
    <property type="match status" value="1"/>
</dbReference>
<dbReference type="PIRSF" id="PIRSF000114">
    <property type="entry name" value="Glycerol-3-P_dh"/>
    <property type="match status" value="1"/>
</dbReference>
<dbReference type="PRINTS" id="PR00077">
    <property type="entry name" value="GPDHDRGNASE"/>
</dbReference>
<dbReference type="SUPFAM" id="SSF48179">
    <property type="entry name" value="6-phosphogluconate dehydrogenase C-terminal domain-like"/>
    <property type="match status" value="1"/>
</dbReference>
<dbReference type="SUPFAM" id="SSF51735">
    <property type="entry name" value="NAD(P)-binding Rossmann-fold domains"/>
    <property type="match status" value="1"/>
</dbReference>
<dbReference type="PROSITE" id="PS00957">
    <property type="entry name" value="NAD_G3PDH"/>
    <property type="match status" value="1"/>
</dbReference>
<accession>P58141</accession>
<protein>
    <recommendedName>
        <fullName evidence="1">Glycerol-3-phosphate dehydrogenase [NAD(P)+]</fullName>
        <ecNumber evidence="1">1.1.1.94</ecNumber>
    </recommendedName>
    <alternativeName>
        <fullName evidence="1">NAD(P)(+)-dependent glycerol-3-phosphate dehydrogenase</fullName>
    </alternativeName>
    <alternativeName>
        <fullName evidence="1">NAD(P)H-dependent dihydroxyacetone-phosphate reductase</fullName>
    </alternativeName>
</protein>
<proteinExistence type="inferred from homology"/>
<name>GPDA_CAUVC</name>
<comment type="function">
    <text evidence="1">Catalyzes the reduction of the glycolytic intermediate dihydroxyacetone phosphate (DHAP) to sn-glycerol 3-phosphate (G3P), the key precursor for phospholipid synthesis.</text>
</comment>
<comment type="catalytic activity">
    <reaction evidence="1">
        <text>sn-glycerol 3-phosphate + NAD(+) = dihydroxyacetone phosphate + NADH + H(+)</text>
        <dbReference type="Rhea" id="RHEA:11092"/>
        <dbReference type="ChEBI" id="CHEBI:15378"/>
        <dbReference type="ChEBI" id="CHEBI:57540"/>
        <dbReference type="ChEBI" id="CHEBI:57597"/>
        <dbReference type="ChEBI" id="CHEBI:57642"/>
        <dbReference type="ChEBI" id="CHEBI:57945"/>
        <dbReference type="EC" id="1.1.1.94"/>
    </reaction>
    <physiologicalReaction direction="right-to-left" evidence="1">
        <dbReference type="Rhea" id="RHEA:11094"/>
    </physiologicalReaction>
</comment>
<comment type="catalytic activity">
    <reaction evidence="1">
        <text>sn-glycerol 3-phosphate + NADP(+) = dihydroxyacetone phosphate + NADPH + H(+)</text>
        <dbReference type="Rhea" id="RHEA:11096"/>
        <dbReference type="ChEBI" id="CHEBI:15378"/>
        <dbReference type="ChEBI" id="CHEBI:57597"/>
        <dbReference type="ChEBI" id="CHEBI:57642"/>
        <dbReference type="ChEBI" id="CHEBI:57783"/>
        <dbReference type="ChEBI" id="CHEBI:58349"/>
        <dbReference type="EC" id="1.1.1.94"/>
    </reaction>
    <physiologicalReaction direction="right-to-left" evidence="1">
        <dbReference type="Rhea" id="RHEA:11098"/>
    </physiologicalReaction>
</comment>
<comment type="pathway">
    <text evidence="1">Membrane lipid metabolism; glycerophospholipid metabolism.</text>
</comment>
<comment type="subcellular location">
    <subcellularLocation>
        <location evidence="1">Cytoplasm</location>
    </subcellularLocation>
</comment>
<comment type="similarity">
    <text evidence="1">Belongs to the NAD-dependent glycerol-3-phosphate dehydrogenase family.</text>
</comment>
<gene>
    <name evidence="1" type="primary">gpsA</name>
    <name type="ordered locus">CC_0070</name>
</gene>
<feature type="chain" id="PRO_0000137940" description="Glycerol-3-phosphate dehydrogenase [NAD(P)+]">
    <location>
        <begin position="1"/>
        <end position="331"/>
    </location>
</feature>
<feature type="active site" description="Proton acceptor" evidence="1">
    <location>
        <position position="190"/>
    </location>
</feature>
<feature type="binding site" evidence="1">
    <location>
        <position position="14"/>
    </location>
    <ligand>
        <name>NADPH</name>
        <dbReference type="ChEBI" id="CHEBI:57783"/>
    </ligand>
</feature>
<feature type="binding site" evidence="1">
    <location>
        <position position="34"/>
    </location>
    <ligand>
        <name>NADPH</name>
        <dbReference type="ChEBI" id="CHEBI:57783"/>
    </ligand>
</feature>
<feature type="binding site" evidence="1">
    <location>
        <position position="107"/>
    </location>
    <ligand>
        <name>NADPH</name>
        <dbReference type="ChEBI" id="CHEBI:57783"/>
    </ligand>
</feature>
<feature type="binding site" evidence="1">
    <location>
        <position position="107"/>
    </location>
    <ligand>
        <name>sn-glycerol 3-phosphate</name>
        <dbReference type="ChEBI" id="CHEBI:57597"/>
    </ligand>
</feature>
<feature type="binding site" evidence="1">
    <location>
        <position position="135"/>
    </location>
    <ligand>
        <name>sn-glycerol 3-phosphate</name>
        <dbReference type="ChEBI" id="CHEBI:57597"/>
    </ligand>
</feature>
<feature type="binding site" evidence="1">
    <location>
        <position position="137"/>
    </location>
    <ligand>
        <name>sn-glycerol 3-phosphate</name>
        <dbReference type="ChEBI" id="CHEBI:57597"/>
    </ligand>
</feature>
<feature type="binding site" evidence="1">
    <location>
        <position position="139"/>
    </location>
    <ligand>
        <name>NADPH</name>
        <dbReference type="ChEBI" id="CHEBI:57783"/>
    </ligand>
</feature>
<feature type="binding site" evidence="1">
    <location>
        <position position="190"/>
    </location>
    <ligand>
        <name>sn-glycerol 3-phosphate</name>
        <dbReference type="ChEBI" id="CHEBI:57597"/>
    </ligand>
</feature>
<feature type="binding site" evidence="1">
    <location>
        <position position="243"/>
    </location>
    <ligand>
        <name>sn-glycerol 3-phosphate</name>
        <dbReference type="ChEBI" id="CHEBI:57597"/>
    </ligand>
</feature>
<feature type="binding site" evidence="1">
    <location>
        <position position="253"/>
    </location>
    <ligand>
        <name>sn-glycerol 3-phosphate</name>
        <dbReference type="ChEBI" id="CHEBI:57597"/>
    </ligand>
</feature>
<feature type="binding site" evidence="1">
    <location>
        <position position="254"/>
    </location>
    <ligand>
        <name>NADPH</name>
        <dbReference type="ChEBI" id="CHEBI:57783"/>
    </ligand>
</feature>
<feature type="binding site" evidence="1">
    <location>
        <position position="254"/>
    </location>
    <ligand>
        <name>sn-glycerol 3-phosphate</name>
        <dbReference type="ChEBI" id="CHEBI:57597"/>
    </ligand>
</feature>
<feature type="binding site" evidence="1">
    <location>
        <position position="255"/>
    </location>
    <ligand>
        <name>sn-glycerol 3-phosphate</name>
        <dbReference type="ChEBI" id="CHEBI:57597"/>
    </ligand>
</feature>
<feature type="binding site" evidence="1">
    <location>
        <position position="278"/>
    </location>
    <ligand>
        <name>NADPH</name>
        <dbReference type="ChEBI" id="CHEBI:57783"/>
    </ligand>
</feature>
<feature type="binding site" evidence="1">
    <location>
        <position position="280"/>
    </location>
    <ligand>
        <name>NADPH</name>
        <dbReference type="ChEBI" id="CHEBI:57783"/>
    </ligand>
</feature>
<organism>
    <name type="scientific">Caulobacter vibrioides (strain ATCC 19089 / CIP 103742 / CB 15)</name>
    <name type="common">Caulobacter crescentus</name>
    <dbReference type="NCBI Taxonomy" id="190650"/>
    <lineage>
        <taxon>Bacteria</taxon>
        <taxon>Pseudomonadati</taxon>
        <taxon>Pseudomonadota</taxon>
        <taxon>Alphaproteobacteria</taxon>
        <taxon>Caulobacterales</taxon>
        <taxon>Caulobacteraceae</taxon>
        <taxon>Caulobacter</taxon>
    </lineage>
</organism>
<evidence type="ECO:0000255" key="1">
    <source>
        <dbReference type="HAMAP-Rule" id="MF_00394"/>
    </source>
</evidence>
<sequence length="331" mass="32957">MTFEKVGVIGAGAWGTALAQVAARAGLAVTLQAREPEIVAAINDTHENAVFLPGIALEPGIKAVADLADLADCDLILAVAPAQHLRAALTAFAPHRKAGAPVVLCSKGVEQGSLKLMTDVAAEALPGAPIAVLSGPSFAGEVARNLPAAVTLACEDEALGRAIAEAIAIPTFRPYTANDLIGAEAGGAVKNVLAIACGIVEGKGLGRNAHATVITRGFAELTRLAVALGARPETVAGLCGLGDLVLTCSSPQSRNMSVGLALGQGLTLEQALAGKVSVAEGVASAPAVRALARKVGVEAPICEAVAAILAGEVAVDAAIAGLLSRPLKPEA</sequence>